<accession>B0CLF8</accession>
<gene>
    <name evidence="1" type="primary">ttcA</name>
    <name type="ordered locus">BSUIS_A0870</name>
</gene>
<comment type="function">
    <text evidence="1">Catalyzes the ATP-dependent 2-thiolation of cytidine in position 32 of tRNA, to form 2-thiocytidine (s(2)C32). The sulfur atoms are provided by the cysteine/cysteine desulfurase (IscS) system.</text>
</comment>
<comment type="catalytic activity">
    <reaction evidence="1">
        <text>cytidine(32) in tRNA + S-sulfanyl-L-cysteinyl-[cysteine desulfurase] + AH2 + ATP = 2-thiocytidine(32) in tRNA + L-cysteinyl-[cysteine desulfurase] + A + AMP + diphosphate + H(+)</text>
        <dbReference type="Rhea" id="RHEA:57048"/>
        <dbReference type="Rhea" id="RHEA-COMP:10288"/>
        <dbReference type="Rhea" id="RHEA-COMP:12157"/>
        <dbReference type="Rhea" id="RHEA-COMP:12158"/>
        <dbReference type="Rhea" id="RHEA-COMP:14821"/>
        <dbReference type="ChEBI" id="CHEBI:13193"/>
        <dbReference type="ChEBI" id="CHEBI:15378"/>
        <dbReference type="ChEBI" id="CHEBI:17499"/>
        <dbReference type="ChEBI" id="CHEBI:29950"/>
        <dbReference type="ChEBI" id="CHEBI:30616"/>
        <dbReference type="ChEBI" id="CHEBI:33019"/>
        <dbReference type="ChEBI" id="CHEBI:61963"/>
        <dbReference type="ChEBI" id="CHEBI:82748"/>
        <dbReference type="ChEBI" id="CHEBI:141453"/>
        <dbReference type="ChEBI" id="CHEBI:456215"/>
    </reaction>
    <physiologicalReaction direction="left-to-right" evidence="1">
        <dbReference type="Rhea" id="RHEA:57049"/>
    </physiologicalReaction>
</comment>
<comment type="cofactor">
    <cofactor evidence="1">
        <name>Mg(2+)</name>
        <dbReference type="ChEBI" id="CHEBI:18420"/>
    </cofactor>
</comment>
<comment type="cofactor">
    <cofactor evidence="1">
        <name>[4Fe-4S] cluster</name>
        <dbReference type="ChEBI" id="CHEBI:49883"/>
    </cofactor>
    <text evidence="1">Binds 1 [4Fe-4S] cluster per subunit. The cluster is chelated by three Cys residues, the fourth Fe has a free coordination site that may bind a sulfur atom transferred from the persulfide of IscS.</text>
</comment>
<comment type="pathway">
    <text evidence="1">tRNA modification.</text>
</comment>
<comment type="subunit">
    <text evidence="1">Homodimer.</text>
</comment>
<comment type="subcellular location">
    <subcellularLocation>
        <location evidence="1">Cytoplasm</location>
    </subcellularLocation>
</comment>
<comment type="miscellaneous">
    <text evidence="1">The thiolation reaction likely consists of two steps: a first activation step by ATP to form an adenylated intermediate of the target base of tRNA, and a second nucleophilic substitution step of the sulfur (S) atom supplied by the hydrosulfide attached to the Fe-S cluster.</text>
</comment>
<comment type="similarity">
    <text evidence="1">Belongs to the TtcA family.</text>
</comment>
<keyword id="KW-0004">4Fe-4S</keyword>
<keyword id="KW-0067">ATP-binding</keyword>
<keyword id="KW-0963">Cytoplasm</keyword>
<keyword id="KW-0408">Iron</keyword>
<keyword id="KW-0411">Iron-sulfur</keyword>
<keyword id="KW-0460">Magnesium</keyword>
<keyword id="KW-0479">Metal-binding</keyword>
<keyword id="KW-0547">Nucleotide-binding</keyword>
<keyword id="KW-0694">RNA-binding</keyword>
<keyword id="KW-0808">Transferase</keyword>
<keyword id="KW-0819">tRNA processing</keyword>
<keyword id="KW-0820">tRNA-binding</keyword>
<feature type="chain" id="PRO_0000348678" description="tRNA-cytidine(32) 2-sulfurtransferase">
    <location>
        <begin position="1"/>
        <end position="293"/>
    </location>
</feature>
<feature type="short sequence motif" description="PP-loop motif" evidence="1">
    <location>
        <begin position="62"/>
        <end position="67"/>
    </location>
</feature>
<feature type="binding site" evidence="1">
    <location>
        <position position="137"/>
    </location>
    <ligand>
        <name>[4Fe-4S] cluster</name>
        <dbReference type="ChEBI" id="CHEBI:49883"/>
    </ligand>
</feature>
<feature type="binding site" evidence="1">
    <location>
        <position position="140"/>
    </location>
    <ligand>
        <name>[4Fe-4S] cluster</name>
        <dbReference type="ChEBI" id="CHEBI:49883"/>
    </ligand>
</feature>
<feature type="binding site" evidence="1">
    <location>
        <position position="228"/>
    </location>
    <ligand>
        <name>[4Fe-4S] cluster</name>
        <dbReference type="ChEBI" id="CHEBI:49883"/>
    </ligand>
</feature>
<reference key="1">
    <citation type="submission" date="2007-12" db="EMBL/GenBank/DDBJ databases">
        <title>Brucella suis ATCC 23445 whole genome shotgun sequencing project.</title>
        <authorList>
            <person name="Setubal J.C."/>
            <person name="Bowns C."/>
            <person name="Boyle S."/>
            <person name="Crasta O.R."/>
            <person name="Czar M.J."/>
            <person name="Dharmanolla C."/>
            <person name="Gillespie J.J."/>
            <person name="Kenyon R.W."/>
            <person name="Lu J."/>
            <person name="Mane S."/>
            <person name="Mohapatra S."/>
            <person name="Nagrani S."/>
            <person name="Purkayastha A."/>
            <person name="Rajasimha H.K."/>
            <person name="Shallom J.M."/>
            <person name="Shallom S."/>
            <person name="Shukla M."/>
            <person name="Snyder E.E."/>
            <person name="Sobral B.W."/>
            <person name="Wattam A.R."/>
            <person name="Will R."/>
            <person name="Williams K."/>
            <person name="Yoo H."/>
            <person name="Bruce D."/>
            <person name="Detter C."/>
            <person name="Munk C."/>
            <person name="Brettin T.S."/>
        </authorList>
    </citation>
    <scope>NUCLEOTIDE SEQUENCE [LARGE SCALE GENOMIC DNA]</scope>
    <source>
        <strain>ATCC 23445 / NCTC 10510</strain>
    </source>
</reference>
<proteinExistence type="inferred from homology"/>
<dbReference type="EC" id="2.8.1.-" evidence="1"/>
<dbReference type="EMBL" id="CP000911">
    <property type="protein sequence ID" value="ABY37938.1"/>
    <property type="molecule type" value="Genomic_DNA"/>
</dbReference>
<dbReference type="RefSeq" id="WP_006072579.1">
    <property type="nucleotide sequence ID" value="NC_010169.1"/>
</dbReference>
<dbReference type="SMR" id="B0CLF8"/>
<dbReference type="KEGG" id="bmt:BSUIS_A0870"/>
<dbReference type="HOGENOM" id="CLU_026481_0_0_5"/>
<dbReference type="Proteomes" id="UP000008545">
    <property type="component" value="Chromosome I"/>
</dbReference>
<dbReference type="GO" id="GO:0005737">
    <property type="term" value="C:cytoplasm"/>
    <property type="evidence" value="ECO:0007669"/>
    <property type="project" value="UniProtKB-SubCell"/>
</dbReference>
<dbReference type="GO" id="GO:0051539">
    <property type="term" value="F:4 iron, 4 sulfur cluster binding"/>
    <property type="evidence" value="ECO:0007669"/>
    <property type="project" value="UniProtKB-UniRule"/>
</dbReference>
<dbReference type="GO" id="GO:0005524">
    <property type="term" value="F:ATP binding"/>
    <property type="evidence" value="ECO:0007669"/>
    <property type="project" value="UniProtKB-UniRule"/>
</dbReference>
<dbReference type="GO" id="GO:0000287">
    <property type="term" value="F:magnesium ion binding"/>
    <property type="evidence" value="ECO:0007669"/>
    <property type="project" value="UniProtKB-UniRule"/>
</dbReference>
<dbReference type="GO" id="GO:0016783">
    <property type="term" value="F:sulfurtransferase activity"/>
    <property type="evidence" value="ECO:0007669"/>
    <property type="project" value="UniProtKB-UniRule"/>
</dbReference>
<dbReference type="GO" id="GO:0000049">
    <property type="term" value="F:tRNA binding"/>
    <property type="evidence" value="ECO:0007669"/>
    <property type="project" value="UniProtKB-KW"/>
</dbReference>
<dbReference type="GO" id="GO:0034227">
    <property type="term" value="P:tRNA thio-modification"/>
    <property type="evidence" value="ECO:0007669"/>
    <property type="project" value="UniProtKB-UniRule"/>
</dbReference>
<dbReference type="CDD" id="cd24138">
    <property type="entry name" value="TtcA-like"/>
    <property type="match status" value="1"/>
</dbReference>
<dbReference type="Gene3D" id="3.40.50.620">
    <property type="entry name" value="HUPs"/>
    <property type="match status" value="1"/>
</dbReference>
<dbReference type="HAMAP" id="MF_01850">
    <property type="entry name" value="TtcA"/>
    <property type="match status" value="1"/>
</dbReference>
<dbReference type="InterPro" id="IPR014729">
    <property type="entry name" value="Rossmann-like_a/b/a_fold"/>
</dbReference>
<dbReference type="InterPro" id="IPR011063">
    <property type="entry name" value="TilS/TtcA_N"/>
</dbReference>
<dbReference type="InterPro" id="IPR012089">
    <property type="entry name" value="tRNA_Cyd_32_2_STrfase"/>
</dbReference>
<dbReference type="InterPro" id="IPR035107">
    <property type="entry name" value="tRNA_thiolation_TtcA_Ctu1"/>
</dbReference>
<dbReference type="NCBIfam" id="NF007972">
    <property type="entry name" value="PRK10696.1"/>
    <property type="match status" value="1"/>
</dbReference>
<dbReference type="PANTHER" id="PTHR43686:SF1">
    <property type="entry name" value="AMINOTRAN_5 DOMAIN-CONTAINING PROTEIN"/>
    <property type="match status" value="1"/>
</dbReference>
<dbReference type="PANTHER" id="PTHR43686">
    <property type="entry name" value="SULFURTRANSFERASE-RELATED"/>
    <property type="match status" value="1"/>
</dbReference>
<dbReference type="Pfam" id="PF01171">
    <property type="entry name" value="ATP_bind_3"/>
    <property type="match status" value="1"/>
</dbReference>
<dbReference type="PIRSF" id="PIRSF004976">
    <property type="entry name" value="ATPase_YdaO"/>
    <property type="match status" value="1"/>
</dbReference>
<dbReference type="SUPFAM" id="SSF52402">
    <property type="entry name" value="Adenine nucleotide alpha hydrolases-like"/>
    <property type="match status" value="1"/>
</dbReference>
<name>TTCA_BRUSI</name>
<organism>
    <name type="scientific">Brucella suis (strain ATCC 23445 / NCTC 10510)</name>
    <dbReference type="NCBI Taxonomy" id="470137"/>
    <lineage>
        <taxon>Bacteria</taxon>
        <taxon>Pseudomonadati</taxon>
        <taxon>Pseudomonadota</taxon>
        <taxon>Alphaproteobacteria</taxon>
        <taxon>Hyphomicrobiales</taxon>
        <taxon>Brucellaceae</taxon>
        <taxon>Brucella/Ochrobactrum group</taxon>
        <taxon>Brucella</taxon>
    </lineage>
</organism>
<protein>
    <recommendedName>
        <fullName evidence="1">tRNA-cytidine(32) 2-sulfurtransferase</fullName>
        <ecNumber evidence="1">2.8.1.-</ecNumber>
    </recommendedName>
    <alternativeName>
        <fullName evidence="1">Two-thiocytidine biosynthesis protein A</fullName>
    </alternativeName>
    <alternativeName>
        <fullName evidence="1">tRNA 2-thiocytidine biosynthesis protein TtcA</fullName>
    </alternativeName>
</protein>
<sequence length="293" mass="33289">MNAFDTDITEHADSSGCHPLFRDVPATVEFNKLRKRLLRLTRQAIEDFAMVKPGDRWMVCLSGGKDSYGLLALLLDLKWRGLLPVELLAVNLDQGQPNFPKHILPDFLTRYGIEHRIEYQDTYSIVTDKLPETSTYCSLCSRLRRGNLYRIAREEGCSAIVLGHHREDILETFFMNLFHGGRLAAMPPKLLNDEGDLMVFRPLAYAAEDDLEKFANAMQFPIIPCDLCGSQDGLQRNAMKAMLIDIEKRMPGRKDTMIRALTNVRPSHLLDRKLFDFAGLMANGEKGSDDALW</sequence>
<evidence type="ECO:0000255" key="1">
    <source>
        <dbReference type="HAMAP-Rule" id="MF_01850"/>
    </source>
</evidence>